<comment type="function">
    <text evidence="1">Catalyzes the stereoinversion of LL-2,6-diaminopimelate (L,L-DAP) to meso-diaminopimelate (meso-DAP), a precursor of L-lysine and an essential component of the bacterial peptidoglycan.</text>
</comment>
<comment type="catalytic activity">
    <reaction evidence="1">
        <text>(2S,6S)-2,6-diaminopimelate = meso-2,6-diaminopimelate</text>
        <dbReference type="Rhea" id="RHEA:15393"/>
        <dbReference type="ChEBI" id="CHEBI:57609"/>
        <dbReference type="ChEBI" id="CHEBI:57791"/>
        <dbReference type="EC" id="5.1.1.7"/>
    </reaction>
</comment>
<comment type="pathway">
    <text evidence="1">Amino-acid biosynthesis; L-lysine biosynthesis via DAP pathway; DL-2,6-diaminopimelate from LL-2,6-diaminopimelate: step 1/1.</text>
</comment>
<comment type="subunit">
    <text evidence="1">Homodimer.</text>
</comment>
<comment type="subcellular location">
    <subcellularLocation>
        <location evidence="1">Cytoplasm</location>
    </subcellularLocation>
</comment>
<comment type="similarity">
    <text evidence="1">Belongs to the diaminopimelate epimerase family.</text>
</comment>
<organism>
    <name type="scientific">Psychrobacter cryohalolentis (strain ATCC BAA-1226 / DSM 17306 / VKM B-2378 / K5)</name>
    <dbReference type="NCBI Taxonomy" id="335284"/>
    <lineage>
        <taxon>Bacteria</taxon>
        <taxon>Pseudomonadati</taxon>
        <taxon>Pseudomonadota</taxon>
        <taxon>Gammaproteobacteria</taxon>
        <taxon>Moraxellales</taxon>
        <taxon>Moraxellaceae</taxon>
        <taxon>Psychrobacter</taxon>
    </lineage>
</organism>
<proteinExistence type="inferred from homology"/>
<protein>
    <recommendedName>
        <fullName evidence="1">Diaminopimelate epimerase</fullName>
        <shortName evidence="1">DAP epimerase</shortName>
        <ecNumber evidence="1">5.1.1.7</ecNumber>
    </recommendedName>
    <alternativeName>
        <fullName evidence="1">PLP-independent amino acid racemase</fullName>
    </alternativeName>
</protein>
<accession>Q1QE99</accession>
<reference key="1">
    <citation type="submission" date="2006-03" db="EMBL/GenBank/DDBJ databases">
        <title>Complete sequence of chromosome of Psychrobacter cryohalolentis K5.</title>
        <authorList>
            <consortium name="US DOE Joint Genome Institute"/>
            <person name="Copeland A."/>
            <person name="Lucas S."/>
            <person name="Lapidus A."/>
            <person name="Barry K."/>
            <person name="Detter J.C."/>
            <person name="Glavina T."/>
            <person name="Hammon N."/>
            <person name="Israni S."/>
            <person name="Dalin E."/>
            <person name="Tice H."/>
            <person name="Pitluck S."/>
            <person name="Brettin T."/>
            <person name="Bruce D."/>
            <person name="Han C."/>
            <person name="Tapia R."/>
            <person name="Sims D.R."/>
            <person name="Gilna P."/>
            <person name="Schmutz J."/>
            <person name="Larimer F."/>
            <person name="Land M."/>
            <person name="Hauser L."/>
            <person name="Kyrpides N."/>
            <person name="Kim E."/>
            <person name="Richardson P."/>
        </authorList>
    </citation>
    <scope>NUCLEOTIDE SEQUENCE [LARGE SCALE GENOMIC DNA]</scope>
    <source>
        <strain>ATCC BAA-1226 / DSM 17306 / VKM B-2378 / K5</strain>
    </source>
</reference>
<keyword id="KW-0028">Amino-acid biosynthesis</keyword>
<keyword id="KW-0963">Cytoplasm</keyword>
<keyword id="KW-0413">Isomerase</keyword>
<keyword id="KW-0457">Lysine biosynthesis</keyword>
<gene>
    <name evidence="1" type="primary">dapF</name>
    <name type="ordered locus">Pcryo_0220</name>
</gene>
<evidence type="ECO:0000255" key="1">
    <source>
        <dbReference type="HAMAP-Rule" id="MF_00197"/>
    </source>
</evidence>
<feature type="chain" id="PRO_1000011939" description="Diaminopimelate epimerase">
    <location>
        <begin position="1"/>
        <end position="295"/>
    </location>
</feature>
<feature type="active site" description="Proton donor" evidence="1">
    <location>
        <position position="75"/>
    </location>
</feature>
<feature type="active site" description="Proton acceptor" evidence="1">
    <location>
        <position position="222"/>
    </location>
</feature>
<feature type="binding site" evidence="1">
    <location>
        <position position="13"/>
    </location>
    <ligand>
        <name>substrate</name>
    </ligand>
</feature>
<feature type="binding site" evidence="1">
    <location>
        <position position="46"/>
    </location>
    <ligand>
        <name>substrate</name>
    </ligand>
</feature>
<feature type="binding site" evidence="1">
    <location>
        <position position="66"/>
    </location>
    <ligand>
        <name>substrate</name>
    </ligand>
</feature>
<feature type="binding site" evidence="1">
    <location>
        <begin position="76"/>
        <end position="77"/>
    </location>
    <ligand>
        <name>substrate</name>
    </ligand>
</feature>
<feature type="binding site" evidence="1">
    <location>
        <position position="162"/>
    </location>
    <ligand>
        <name>substrate</name>
    </ligand>
</feature>
<feature type="binding site" evidence="1">
    <location>
        <position position="195"/>
    </location>
    <ligand>
        <name>substrate</name>
    </ligand>
</feature>
<feature type="binding site" evidence="1">
    <location>
        <begin position="213"/>
        <end position="214"/>
    </location>
    <ligand>
        <name>substrate</name>
    </ligand>
</feature>
<feature type="binding site" evidence="1">
    <location>
        <begin position="223"/>
        <end position="224"/>
    </location>
    <ligand>
        <name>substrate</name>
    </ligand>
</feature>
<feature type="site" description="Could be important to modulate the pK values of the two catalytic cysteine residues" evidence="1">
    <location>
        <position position="164"/>
    </location>
</feature>
<feature type="site" description="Could be important to modulate the pK values of the two catalytic cysteine residues" evidence="1">
    <location>
        <position position="213"/>
    </location>
</feature>
<feature type="site" description="Important for dimerization" evidence="1">
    <location>
        <position position="274"/>
    </location>
</feature>
<name>DAPF_PSYCK</name>
<dbReference type="EC" id="5.1.1.7" evidence="1"/>
<dbReference type="EMBL" id="CP000323">
    <property type="protein sequence ID" value="ABE74004.1"/>
    <property type="molecule type" value="Genomic_DNA"/>
</dbReference>
<dbReference type="RefSeq" id="WP_011512593.1">
    <property type="nucleotide sequence ID" value="NC_007969.1"/>
</dbReference>
<dbReference type="SMR" id="Q1QE99"/>
<dbReference type="STRING" id="335284.Pcryo_0220"/>
<dbReference type="KEGG" id="pcr:Pcryo_0220"/>
<dbReference type="eggNOG" id="COG0253">
    <property type="taxonomic scope" value="Bacteria"/>
</dbReference>
<dbReference type="HOGENOM" id="CLU_053306_1_1_6"/>
<dbReference type="UniPathway" id="UPA00034">
    <property type="reaction ID" value="UER00025"/>
</dbReference>
<dbReference type="Proteomes" id="UP000002425">
    <property type="component" value="Chromosome"/>
</dbReference>
<dbReference type="GO" id="GO:0005829">
    <property type="term" value="C:cytosol"/>
    <property type="evidence" value="ECO:0007669"/>
    <property type="project" value="TreeGrafter"/>
</dbReference>
<dbReference type="GO" id="GO:0008837">
    <property type="term" value="F:diaminopimelate epimerase activity"/>
    <property type="evidence" value="ECO:0007669"/>
    <property type="project" value="UniProtKB-UniRule"/>
</dbReference>
<dbReference type="GO" id="GO:0009089">
    <property type="term" value="P:lysine biosynthetic process via diaminopimelate"/>
    <property type="evidence" value="ECO:0007669"/>
    <property type="project" value="UniProtKB-UniRule"/>
</dbReference>
<dbReference type="FunFam" id="3.10.310.10:FF:000001">
    <property type="entry name" value="Diaminopimelate epimerase"/>
    <property type="match status" value="1"/>
</dbReference>
<dbReference type="FunFam" id="3.10.310.10:FF:000004">
    <property type="entry name" value="Diaminopimelate epimerase"/>
    <property type="match status" value="1"/>
</dbReference>
<dbReference type="Gene3D" id="3.10.310.10">
    <property type="entry name" value="Diaminopimelate Epimerase, Chain A, domain 1"/>
    <property type="match status" value="2"/>
</dbReference>
<dbReference type="HAMAP" id="MF_00197">
    <property type="entry name" value="DAP_epimerase"/>
    <property type="match status" value="1"/>
</dbReference>
<dbReference type="InterPro" id="IPR018510">
    <property type="entry name" value="DAP_epimerase_AS"/>
</dbReference>
<dbReference type="InterPro" id="IPR001653">
    <property type="entry name" value="DAP_epimerase_DapF"/>
</dbReference>
<dbReference type="NCBIfam" id="TIGR00652">
    <property type="entry name" value="DapF"/>
    <property type="match status" value="1"/>
</dbReference>
<dbReference type="PANTHER" id="PTHR31689:SF0">
    <property type="entry name" value="DIAMINOPIMELATE EPIMERASE"/>
    <property type="match status" value="1"/>
</dbReference>
<dbReference type="PANTHER" id="PTHR31689">
    <property type="entry name" value="DIAMINOPIMELATE EPIMERASE, CHLOROPLASTIC"/>
    <property type="match status" value="1"/>
</dbReference>
<dbReference type="Pfam" id="PF01678">
    <property type="entry name" value="DAP_epimerase"/>
    <property type="match status" value="2"/>
</dbReference>
<dbReference type="SUPFAM" id="SSF54506">
    <property type="entry name" value="Diaminopimelate epimerase-like"/>
    <property type="match status" value="1"/>
</dbReference>
<dbReference type="PROSITE" id="PS01326">
    <property type="entry name" value="DAP_EPIMERASE"/>
    <property type="match status" value="1"/>
</dbReference>
<sequence>MLIEFTKMHGLGNDFMVIDLVTQRLDLTKDLVQLLGDRHLGIGFDQLLVVEPPMRPDVDFSYRIFNTDGTEVEQCGNGARCFARFVQARKLSFKQRLRVETASGIISLTTDRYGWVEVDMGKPKFEPSEIPFTPRAITKIQNAYHLDVNGTPVQLYVANMGNPHAVIKVDDVLDADVETLGKAIESHPAFPERVNVGFMQIMNQRHIRLRVFERGVGETQACGTGACAAVAIGIREGWLDEGEDVRAQLYGGSMVIKWQPGYSVMMTGPTAFVYEGVFSPDGLMAQAGIKPNPES</sequence>